<reference key="1">
    <citation type="submission" date="2006-03" db="EMBL/GenBank/DDBJ databases">
        <title>Complete sequence of chromosome of Nitrobacter hamburgensis X14.</title>
        <authorList>
            <consortium name="US DOE Joint Genome Institute"/>
            <person name="Copeland A."/>
            <person name="Lucas S."/>
            <person name="Lapidus A."/>
            <person name="Barry K."/>
            <person name="Detter J.C."/>
            <person name="Glavina del Rio T."/>
            <person name="Hammon N."/>
            <person name="Israni S."/>
            <person name="Dalin E."/>
            <person name="Tice H."/>
            <person name="Pitluck S."/>
            <person name="Chain P."/>
            <person name="Malfatti S."/>
            <person name="Shin M."/>
            <person name="Vergez L."/>
            <person name="Schmutz J."/>
            <person name="Larimer F."/>
            <person name="Land M."/>
            <person name="Hauser L."/>
            <person name="Kyrpides N."/>
            <person name="Ivanova N."/>
            <person name="Ward B."/>
            <person name="Arp D."/>
            <person name="Klotz M."/>
            <person name="Stein L."/>
            <person name="O'Mullan G."/>
            <person name="Starkenburg S."/>
            <person name="Sayavedra L."/>
            <person name="Poret-Peterson A.T."/>
            <person name="Gentry M.E."/>
            <person name="Bruce D."/>
            <person name="Richardson P."/>
        </authorList>
    </citation>
    <scope>NUCLEOTIDE SEQUENCE [LARGE SCALE GENOMIC DNA]</scope>
    <source>
        <strain>DSM 10229 / NCIMB 13809 / X14</strain>
    </source>
</reference>
<sequence>MHRYRSHTCGALRDSHIDQTVRLSGWCHRIRDHGGVLFIDLRDHYGLTQCVADPDSPAFAQAEKLRSEWVVRIDGKARLRPAGTENPELPTGQIEIYINEIEVLGPADELPLPVFGEQEYPEDIRLKYRFLDLRREKLHQNIMTRGAIVDSMRKRMKEQGFFEFQTPILTASSPEGARDFLVPSRIHPGKFYALPQAPQQYKQLLMMSGFDRYFQIAPCFRDEDPRADRLPGEFYQLDLEMSFVEQDDVFAAVEPVVTGVFEEFAKGKPVTKNWPRIPFAESLRKYGTDKPDLRNPLLMQDVSQHFRGSGFKVFARMLEDSKNQVWAIPGPGGGSRAFCDRMNSWAQGEGQPGLGYIMWREGGEGAGPLANNIGPERTEAIRQQLGLKAGDAAFFVAGDPAKFWKFAGLARTKLGEELNVIDKDRFELAWIVDFPMYEYNEDEKKVDFSHNPFSMPQGGLDALNNQDPLTIKAFQYDITCNGYEIASGGIRNHRPEAMVKAFEIAGYGENDVVERFGGMYRAFQYGAPPHGGMAAGVDRVVMLLCGTTNLREISLFPMNQRAEDLLMGAPSDVTPKQLRELHIRLNLPQD</sequence>
<protein>
    <recommendedName>
        <fullName evidence="1">Aspartate--tRNA(Asp/Asn) ligase</fullName>
        <ecNumber evidence="1">6.1.1.23</ecNumber>
    </recommendedName>
    <alternativeName>
        <fullName evidence="1">Aspartyl-tRNA synthetase</fullName>
        <shortName evidence="1">AspRS</shortName>
    </alternativeName>
    <alternativeName>
        <fullName evidence="1">Non-discriminating aspartyl-tRNA synthetase</fullName>
        <shortName evidence="1">ND-AspRS</shortName>
    </alternativeName>
</protein>
<organism>
    <name type="scientific">Nitrobacter hamburgensis (strain DSM 10229 / NCIMB 13809 / X14)</name>
    <dbReference type="NCBI Taxonomy" id="323097"/>
    <lineage>
        <taxon>Bacteria</taxon>
        <taxon>Pseudomonadati</taxon>
        <taxon>Pseudomonadota</taxon>
        <taxon>Alphaproteobacteria</taxon>
        <taxon>Hyphomicrobiales</taxon>
        <taxon>Nitrobacteraceae</taxon>
        <taxon>Nitrobacter</taxon>
    </lineage>
</organism>
<accession>Q1QLI9</accession>
<evidence type="ECO:0000255" key="1">
    <source>
        <dbReference type="HAMAP-Rule" id="MF_00044"/>
    </source>
</evidence>
<gene>
    <name evidence="1" type="primary">aspS</name>
    <name type="ordered locus">Nham_2111</name>
</gene>
<dbReference type="EC" id="6.1.1.23" evidence="1"/>
<dbReference type="EMBL" id="CP000319">
    <property type="protein sequence ID" value="ABE62908.1"/>
    <property type="molecule type" value="Genomic_DNA"/>
</dbReference>
<dbReference type="RefSeq" id="WP_011510587.1">
    <property type="nucleotide sequence ID" value="NC_007964.1"/>
</dbReference>
<dbReference type="SMR" id="Q1QLI9"/>
<dbReference type="STRING" id="323097.Nham_2111"/>
<dbReference type="KEGG" id="nha:Nham_2111"/>
<dbReference type="eggNOG" id="COG0173">
    <property type="taxonomic scope" value="Bacteria"/>
</dbReference>
<dbReference type="HOGENOM" id="CLU_014330_3_2_5"/>
<dbReference type="OrthoDB" id="9802326at2"/>
<dbReference type="Proteomes" id="UP000001953">
    <property type="component" value="Chromosome"/>
</dbReference>
<dbReference type="GO" id="GO:0005737">
    <property type="term" value="C:cytoplasm"/>
    <property type="evidence" value="ECO:0007669"/>
    <property type="project" value="UniProtKB-SubCell"/>
</dbReference>
<dbReference type="GO" id="GO:0004815">
    <property type="term" value="F:aspartate-tRNA ligase activity"/>
    <property type="evidence" value="ECO:0007669"/>
    <property type="project" value="UniProtKB-UniRule"/>
</dbReference>
<dbReference type="GO" id="GO:0050560">
    <property type="term" value="F:aspartate-tRNA(Asn) ligase activity"/>
    <property type="evidence" value="ECO:0007669"/>
    <property type="project" value="UniProtKB-EC"/>
</dbReference>
<dbReference type="GO" id="GO:0005524">
    <property type="term" value="F:ATP binding"/>
    <property type="evidence" value="ECO:0007669"/>
    <property type="project" value="UniProtKB-UniRule"/>
</dbReference>
<dbReference type="GO" id="GO:0003676">
    <property type="term" value="F:nucleic acid binding"/>
    <property type="evidence" value="ECO:0007669"/>
    <property type="project" value="InterPro"/>
</dbReference>
<dbReference type="GO" id="GO:0006422">
    <property type="term" value="P:aspartyl-tRNA aminoacylation"/>
    <property type="evidence" value="ECO:0007669"/>
    <property type="project" value="UniProtKB-UniRule"/>
</dbReference>
<dbReference type="CDD" id="cd00777">
    <property type="entry name" value="AspRS_core"/>
    <property type="match status" value="1"/>
</dbReference>
<dbReference type="CDD" id="cd04317">
    <property type="entry name" value="EcAspRS_like_N"/>
    <property type="match status" value="1"/>
</dbReference>
<dbReference type="Gene3D" id="3.30.930.10">
    <property type="entry name" value="Bira Bifunctional Protein, Domain 2"/>
    <property type="match status" value="1"/>
</dbReference>
<dbReference type="Gene3D" id="3.30.1360.30">
    <property type="entry name" value="GAD-like domain"/>
    <property type="match status" value="1"/>
</dbReference>
<dbReference type="Gene3D" id="2.40.50.140">
    <property type="entry name" value="Nucleic acid-binding proteins"/>
    <property type="match status" value="1"/>
</dbReference>
<dbReference type="HAMAP" id="MF_00044">
    <property type="entry name" value="Asp_tRNA_synth_type1"/>
    <property type="match status" value="1"/>
</dbReference>
<dbReference type="InterPro" id="IPR004364">
    <property type="entry name" value="Aa-tRNA-synt_II"/>
</dbReference>
<dbReference type="InterPro" id="IPR006195">
    <property type="entry name" value="aa-tRNA-synth_II"/>
</dbReference>
<dbReference type="InterPro" id="IPR045864">
    <property type="entry name" value="aa-tRNA-synth_II/BPL/LPL"/>
</dbReference>
<dbReference type="InterPro" id="IPR004524">
    <property type="entry name" value="Asp-tRNA-ligase_1"/>
</dbReference>
<dbReference type="InterPro" id="IPR047089">
    <property type="entry name" value="Asp-tRNA-ligase_1_N"/>
</dbReference>
<dbReference type="InterPro" id="IPR002312">
    <property type="entry name" value="Asp/Asn-tRNA-synth_IIb"/>
</dbReference>
<dbReference type="InterPro" id="IPR047090">
    <property type="entry name" value="AspRS_core"/>
</dbReference>
<dbReference type="InterPro" id="IPR004115">
    <property type="entry name" value="GAD-like_sf"/>
</dbReference>
<dbReference type="InterPro" id="IPR029351">
    <property type="entry name" value="GAD_dom"/>
</dbReference>
<dbReference type="InterPro" id="IPR012340">
    <property type="entry name" value="NA-bd_OB-fold"/>
</dbReference>
<dbReference type="InterPro" id="IPR004365">
    <property type="entry name" value="NA-bd_OB_tRNA"/>
</dbReference>
<dbReference type="NCBIfam" id="TIGR00459">
    <property type="entry name" value="aspS_bact"/>
    <property type="match status" value="1"/>
</dbReference>
<dbReference type="NCBIfam" id="NF001750">
    <property type="entry name" value="PRK00476.1"/>
    <property type="match status" value="1"/>
</dbReference>
<dbReference type="PANTHER" id="PTHR22594:SF5">
    <property type="entry name" value="ASPARTATE--TRNA LIGASE, MITOCHONDRIAL"/>
    <property type="match status" value="1"/>
</dbReference>
<dbReference type="PANTHER" id="PTHR22594">
    <property type="entry name" value="ASPARTYL/LYSYL-TRNA SYNTHETASE"/>
    <property type="match status" value="1"/>
</dbReference>
<dbReference type="Pfam" id="PF02938">
    <property type="entry name" value="GAD"/>
    <property type="match status" value="1"/>
</dbReference>
<dbReference type="Pfam" id="PF00152">
    <property type="entry name" value="tRNA-synt_2"/>
    <property type="match status" value="1"/>
</dbReference>
<dbReference type="Pfam" id="PF01336">
    <property type="entry name" value="tRNA_anti-codon"/>
    <property type="match status" value="1"/>
</dbReference>
<dbReference type="PRINTS" id="PR01042">
    <property type="entry name" value="TRNASYNTHASP"/>
</dbReference>
<dbReference type="SUPFAM" id="SSF55681">
    <property type="entry name" value="Class II aaRS and biotin synthetases"/>
    <property type="match status" value="1"/>
</dbReference>
<dbReference type="SUPFAM" id="SSF55261">
    <property type="entry name" value="GAD domain-like"/>
    <property type="match status" value="1"/>
</dbReference>
<dbReference type="SUPFAM" id="SSF50249">
    <property type="entry name" value="Nucleic acid-binding proteins"/>
    <property type="match status" value="1"/>
</dbReference>
<dbReference type="PROSITE" id="PS50862">
    <property type="entry name" value="AA_TRNA_LIGASE_II"/>
    <property type="match status" value="1"/>
</dbReference>
<proteinExistence type="inferred from homology"/>
<keyword id="KW-0030">Aminoacyl-tRNA synthetase</keyword>
<keyword id="KW-0067">ATP-binding</keyword>
<keyword id="KW-0963">Cytoplasm</keyword>
<keyword id="KW-0436">Ligase</keyword>
<keyword id="KW-0547">Nucleotide-binding</keyword>
<keyword id="KW-0648">Protein biosynthesis</keyword>
<keyword id="KW-1185">Reference proteome</keyword>
<feature type="chain" id="PRO_1000006716" description="Aspartate--tRNA(Asp/Asn) ligase">
    <location>
        <begin position="1"/>
        <end position="590"/>
    </location>
</feature>
<feature type="region of interest" description="Aspartate" evidence="1">
    <location>
        <begin position="199"/>
        <end position="202"/>
    </location>
</feature>
<feature type="binding site" evidence="1">
    <location>
        <position position="175"/>
    </location>
    <ligand>
        <name>L-aspartate</name>
        <dbReference type="ChEBI" id="CHEBI:29991"/>
    </ligand>
</feature>
<feature type="binding site" evidence="1">
    <location>
        <begin position="221"/>
        <end position="223"/>
    </location>
    <ligand>
        <name>ATP</name>
        <dbReference type="ChEBI" id="CHEBI:30616"/>
    </ligand>
</feature>
<feature type="binding site" evidence="1">
    <location>
        <position position="221"/>
    </location>
    <ligand>
        <name>L-aspartate</name>
        <dbReference type="ChEBI" id="CHEBI:29991"/>
    </ligand>
</feature>
<feature type="binding site" evidence="1">
    <location>
        <position position="450"/>
    </location>
    <ligand>
        <name>L-aspartate</name>
        <dbReference type="ChEBI" id="CHEBI:29991"/>
    </ligand>
</feature>
<feature type="binding site" evidence="1">
    <location>
        <position position="484"/>
    </location>
    <ligand>
        <name>ATP</name>
        <dbReference type="ChEBI" id="CHEBI:30616"/>
    </ligand>
</feature>
<feature type="binding site" evidence="1">
    <location>
        <position position="491"/>
    </location>
    <ligand>
        <name>L-aspartate</name>
        <dbReference type="ChEBI" id="CHEBI:29991"/>
    </ligand>
</feature>
<feature type="binding site" evidence="1">
    <location>
        <begin position="536"/>
        <end position="539"/>
    </location>
    <ligand>
        <name>ATP</name>
        <dbReference type="ChEBI" id="CHEBI:30616"/>
    </ligand>
</feature>
<feature type="site" description="Important for tRNA non-discrimination" evidence="1">
    <location>
        <position position="33"/>
    </location>
</feature>
<feature type="site" description="Important for tRNA non-discrimination" evidence="1">
    <location>
        <position position="83"/>
    </location>
</feature>
<comment type="function">
    <text evidence="1">Aspartyl-tRNA synthetase with relaxed tRNA specificity since it is able to aspartylate not only its cognate tRNA(Asp) but also tRNA(Asn). Reaction proceeds in two steps: L-aspartate is first activated by ATP to form Asp-AMP and then transferred to the acceptor end of tRNA(Asp/Asn).</text>
</comment>
<comment type="catalytic activity">
    <reaction evidence="1">
        <text>tRNA(Asx) + L-aspartate + ATP = L-aspartyl-tRNA(Asx) + AMP + diphosphate</text>
        <dbReference type="Rhea" id="RHEA:18349"/>
        <dbReference type="Rhea" id="RHEA-COMP:9710"/>
        <dbReference type="Rhea" id="RHEA-COMP:9711"/>
        <dbReference type="ChEBI" id="CHEBI:29991"/>
        <dbReference type="ChEBI" id="CHEBI:30616"/>
        <dbReference type="ChEBI" id="CHEBI:33019"/>
        <dbReference type="ChEBI" id="CHEBI:78442"/>
        <dbReference type="ChEBI" id="CHEBI:78516"/>
        <dbReference type="ChEBI" id="CHEBI:456215"/>
        <dbReference type="EC" id="6.1.1.23"/>
    </reaction>
</comment>
<comment type="subunit">
    <text evidence="1">Homodimer.</text>
</comment>
<comment type="subcellular location">
    <subcellularLocation>
        <location evidence="1">Cytoplasm</location>
    </subcellularLocation>
</comment>
<comment type="similarity">
    <text evidence="1">Belongs to the class-II aminoacyl-tRNA synthetase family. Type 1 subfamily.</text>
</comment>
<name>SYDND_NITHX</name>